<accession>Q8X7G2</accession>
<accession>Q7AEJ1</accession>
<feature type="chain" id="PRO_0000272687" description="Gamma-glutamyl-gamma-aminobutyrate hydrolase">
    <location>
        <begin position="1"/>
        <end position="254"/>
    </location>
</feature>
<feature type="domain" description="Glutamine amidotransferase type-1" evidence="2">
    <location>
        <begin position="16"/>
        <end position="250"/>
    </location>
</feature>
<feature type="active site" description="Nucleophile" evidence="2">
    <location>
        <position position="114"/>
    </location>
</feature>
<feature type="active site" evidence="2">
    <location>
        <position position="222"/>
    </location>
</feature>
<feature type="active site" evidence="2">
    <location>
        <position position="224"/>
    </location>
</feature>
<comment type="function">
    <text evidence="1">Involved in the breakdown of putrescine via hydrolysis of the gamma-glutamyl linkage of gamma-glutamyl-gamma-aminobutyrate.</text>
</comment>
<comment type="catalytic activity">
    <reaction>
        <text>4-(gamma-L-glutamylamino)butanoate + H2O = 4-aminobutanoate + L-glutamate</text>
        <dbReference type="Rhea" id="RHEA:19737"/>
        <dbReference type="ChEBI" id="CHEBI:15377"/>
        <dbReference type="ChEBI" id="CHEBI:29985"/>
        <dbReference type="ChEBI" id="CHEBI:58800"/>
        <dbReference type="ChEBI" id="CHEBI:59888"/>
        <dbReference type="EC" id="3.5.1.94"/>
    </reaction>
</comment>
<comment type="pathway">
    <text>Amine and polyamine degradation; putrescine degradation; 4-aminobutanoate from putrescine: step 4/4.</text>
</comment>
<comment type="similarity">
    <text evidence="3">Belongs to the peptidase C26 family.</text>
</comment>
<comment type="sequence caution" evidence="3">
    <conflict type="erroneous initiation">
        <sequence resource="EMBL-CDS" id="AAG56506"/>
    </conflict>
</comment>
<comment type="sequence caution" evidence="3">
    <conflict type="erroneous initiation">
        <sequence resource="EMBL-CDS" id="BAB35298"/>
    </conflict>
</comment>
<sequence>MENIMNNPVIGVVMCRNRLKGHATQTLQEKYLNAIIHAGGLPIALPHALAEPSLLEQLLPKLDGIYLPGSPSNVQPHLYGENGDEPDADPERDLLSMALINAALERRIPIFAICRGLQELVVATGGSLHRKLCEQPELLEHREDPELPVEQQYAPSHEVQVEEGGLLSALLPECSNFWVNSLHGQGAKVVSPRLRVEARSPDGLVEAVSVINHPFALGVQWHPEWNSSEYALSRILFEGFITACQHHIAEKQRL</sequence>
<gene>
    <name type="primary">puuD</name>
    <name type="ordered locus">Z2490</name>
    <name type="ordered locus">ECs1875</name>
</gene>
<dbReference type="EC" id="3.5.1.94"/>
<dbReference type="EMBL" id="AE005174">
    <property type="protein sequence ID" value="AAG56506.1"/>
    <property type="status" value="ALT_INIT"/>
    <property type="molecule type" value="Genomic_DNA"/>
</dbReference>
<dbReference type="EMBL" id="BA000007">
    <property type="protein sequence ID" value="BAB35298.1"/>
    <property type="status" value="ALT_INIT"/>
    <property type="molecule type" value="Genomic_DNA"/>
</dbReference>
<dbReference type="PIR" id="C90863">
    <property type="entry name" value="C90863"/>
</dbReference>
<dbReference type="PIR" id="F85755">
    <property type="entry name" value="F85755"/>
</dbReference>
<dbReference type="RefSeq" id="NP_309902.2">
    <property type="nucleotide sequence ID" value="NC_002695.1"/>
</dbReference>
<dbReference type="RefSeq" id="WP_001322278.1">
    <property type="nucleotide sequence ID" value="NZ_VOAI01000015.1"/>
</dbReference>
<dbReference type="SMR" id="Q8X7G2"/>
<dbReference type="STRING" id="155864.Z2490"/>
<dbReference type="MEROPS" id="C26.961"/>
<dbReference type="GeneID" id="912701"/>
<dbReference type="KEGG" id="ece:Z2490"/>
<dbReference type="KEGG" id="ecs:ECs_1875"/>
<dbReference type="PATRIC" id="fig|386585.9.peg.1978"/>
<dbReference type="eggNOG" id="COG2071">
    <property type="taxonomic scope" value="Bacteria"/>
</dbReference>
<dbReference type="HOGENOM" id="CLU_030756_0_0_6"/>
<dbReference type="OMA" id="HRMPPDG"/>
<dbReference type="UniPathway" id="UPA00188">
    <property type="reaction ID" value="UER00883"/>
</dbReference>
<dbReference type="Proteomes" id="UP000000558">
    <property type="component" value="Chromosome"/>
</dbReference>
<dbReference type="Proteomes" id="UP000002519">
    <property type="component" value="Chromosome"/>
</dbReference>
<dbReference type="GO" id="GO:0005829">
    <property type="term" value="C:cytosol"/>
    <property type="evidence" value="ECO:0007669"/>
    <property type="project" value="TreeGrafter"/>
</dbReference>
<dbReference type="GO" id="GO:0033969">
    <property type="term" value="F:gamma-glutamyl-gamma-aminobutyrate hydrolase activity"/>
    <property type="evidence" value="ECO:0007669"/>
    <property type="project" value="UniProtKB-EC"/>
</dbReference>
<dbReference type="GO" id="GO:0009447">
    <property type="term" value="P:putrescine catabolic process"/>
    <property type="evidence" value="ECO:0007669"/>
    <property type="project" value="UniProtKB-UniPathway"/>
</dbReference>
<dbReference type="CDD" id="cd01745">
    <property type="entry name" value="GATase1_2"/>
    <property type="match status" value="1"/>
</dbReference>
<dbReference type="FunFam" id="3.40.50.880:FF:000030">
    <property type="entry name" value="Gamma-glutamyl-gamma-aminobutyrate hydrolase PuuD"/>
    <property type="match status" value="1"/>
</dbReference>
<dbReference type="Gene3D" id="3.40.50.880">
    <property type="match status" value="1"/>
</dbReference>
<dbReference type="InterPro" id="IPR029062">
    <property type="entry name" value="Class_I_gatase-like"/>
</dbReference>
<dbReference type="InterPro" id="IPR011697">
    <property type="entry name" value="Peptidase_C26"/>
</dbReference>
<dbReference type="InterPro" id="IPR044668">
    <property type="entry name" value="PuuD-like"/>
</dbReference>
<dbReference type="NCBIfam" id="NF008471">
    <property type="entry name" value="PRK11366.1"/>
    <property type="match status" value="1"/>
</dbReference>
<dbReference type="PANTHER" id="PTHR43235">
    <property type="entry name" value="GLUTAMINE AMIDOTRANSFERASE PB2B2.05-RELATED"/>
    <property type="match status" value="1"/>
</dbReference>
<dbReference type="PANTHER" id="PTHR43235:SF1">
    <property type="entry name" value="GLUTAMINE AMIDOTRANSFERASE PB2B2.05-RELATED"/>
    <property type="match status" value="1"/>
</dbReference>
<dbReference type="Pfam" id="PF07722">
    <property type="entry name" value="Peptidase_C26"/>
    <property type="match status" value="1"/>
</dbReference>
<dbReference type="SUPFAM" id="SSF52317">
    <property type="entry name" value="Class I glutamine amidotransferase-like"/>
    <property type="match status" value="1"/>
</dbReference>
<dbReference type="PROSITE" id="PS51273">
    <property type="entry name" value="GATASE_TYPE_1"/>
    <property type="match status" value="1"/>
</dbReference>
<protein>
    <recommendedName>
        <fullName>Gamma-glutamyl-gamma-aminobutyrate hydrolase</fullName>
        <shortName>Gamma-Glu-GABA hydrolase</shortName>
        <ecNumber>3.5.1.94</ecNumber>
    </recommendedName>
</protein>
<organism>
    <name type="scientific">Escherichia coli O157:H7</name>
    <dbReference type="NCBI Taxonomy" id="83334"/>
    <lineage>
        <taxon>Bacteria</taxon>
        <taxon>Pseudomonadati</taxon>
        <taxon>Pseudomonadota</taxon>
        <taxon>Gammaproteobacteria</taxon>
        <taxon>Enterobacterales</taxon>
        <taxon>Enterobacteriaceae</taxon>
        <taxon>Escherichia</taxon>
    </lineage>
</organism>
<name>PUUD_ECO57</name>
<reference key="1">
    <citation type="journal article" date="2001" name="Nature">
        <title>Genome sequence of enterohaemorrhagic Escherichia coli O157:H7.</title>
        <authorList>
            <person name="Perna N.T."/>
            <person name="Plunkett G. III"/>
            <person name="Burland V."/>
            <person name="Mau B."/>
            <person name="Glasner J.D."/>
            <person name="Rose D.J."/>
            <person name="Mayhew G.F."/>
            <person name="Evans P.S."/>
            <person name="Gregor J."/>
            <person name="Kirkpatrick H.A."/>
            <person name="Posfai G."/>
            <person name="Hackett J."/>
            <person name="Klink S."/>
            <person name="Boutin A."/>
            <person name="Shao Y."/>
            <person name="Miller L."/>
            <person name="Grotbeck E.J."/>
            <person name="Davis N.W."/>
            <person name="Lim A."/>
            <person name="Dimalanta E.T."/>
            <person name="Potamousis K."/>
            <person name="Apodaca J."/>
            <person name="Anantharaman T.S."/>
            <person name="Lin J."/>
            <person name="Yen G."/>
            <person name="Schwartz D.C."/>
            <person name="Welch R.A."/>
            <person name="Blattner F.R."/>
        </authorList>
    </citation>
    <scope>NUCLEOTIDE SEQUENCE [LARGE SCALE GENOMIC DNA]</scope>
    <source>
        <strain>O157:H7 / EDL933 / ATCC 700927 / EHEC</strain>
    </source>
</reference>
<reference key="2">
    <citation type="journal article" date="2001" name="DNA Res.">
        <title>Complete genome sequence of enterohemorrhagic Escherichia coli O157:H7 and genomic comparison with a laboratory strain K-12.</title>
        <authorList>
            <person name="Hayashi T."/>
            <person name="Makino K."/>
            <person name="Ohnishi M."/>
            <person name="Kurokawa K."/>
            <person name="Ishii K."/>
            <person name="Yokoyama K."/>
            <person name="Han C.-G."/>
            <person name="Ohtsubo E."/>
            <person name="Nakayama K."/>
            <person name="Murata T."/>
            <person name="Tanaka M."/>
            <person name="Tobe T."/>
            <person name="Iida T."/>
            <person name="Takami H."/>
            <person name="Honda T."/>
            <person name="Sasakawa C."/>
            <person name="Ogasawara N."/>
            <person name="Yasunaga T."/>
            <person name="Kuhara S."/>
            <person name="Shiba T."/>
            <person name="Hattori M."/>
            <person name="Shinagawa H."/>
        </authorList>
    </citation>
    <scope>NUCLEOTIDE SEQUENCE [LARGE SCALE GENOMIC DNA]</scope>
    <source>
        <strain>O157:H7 / Sakai / RIMD 0509952 / EHEC</strain>
    </source>
</reference>
<evidence type="ECO:0000250" key="1"/>
<evidence type="ECO:0000255" key="2">
    <source>
        <dbReference type="PROSITE-ProRule" id="PRU00605"/>
    </source>
</evidence>
<evidence type="ECO:0000305" key="3"/>
<keyword id="KW-0315">Glutamine amidotransferase</keyword>
<keyword id="KW-0378">Hydrolase</keyword>
<keyword id="KW-1185">Reference proteome</keyword>
<proteinExistence type="inferred from homology"/>